<sequence length="604" mass="62230">MDPQQQFCLKWNSFSSNLAITFSNLFKSDLLADVILSCDGVVFKAHKLILAACSKKFADLFENTPTNGQCVIILEATTPDNMAALLEFMYKGEVHVSQEALNSFLKSAESLQVKGLSTETGRLAAQQAQQHMGDLSPLDSPTGRRSVRNSLSGGSSSIVPGGVGIGLGGGATGANSMSGMGIGNGLSLAGMAAGGGMAAAANAAASSLSTLAASANIVDRCGSAGANIISGSAAGIGGSHSGGAGNGSGTVGIGGNGVGSGGGNNGPISLGSGAGAAHHLGGSTGILKQECDSLMHPGGSSSSSGMGYTHVPPIYRPINYEPPRKRAIVRSPYSEQEQRGSVLRDGSKSSECPSPINKPPYHRPSSSASSTAPTEADTMHSERASPQSSRYENHSPSTTAGNGNATSSLERIVKSERNNGSANEANDDDRELMDESTDNGAEDLRVKLENLKYSPPPPPNSNTSSTTPNTLLENLKADGTLSSNLAASIAPADMLNVWNATKMNNKNSVNTADGKKLKCLYCDRLYGYETNLRAHIRQRHQGIRVPCPFCERTFTRNNTVRRHIAREHKQEIGLAAGATIAPAHLAAAAAASAAATAAASNHSP</sequence>
<accession>Q9VQ30</accession>
<accession>Q8IGM8</accession>
<accession>Q9VQ31</accession>
<keyword id="KW-0217">Developmental protein</keyword>
<keyword id="KW-0221">Differentiation</keyword>
<keyword id="KW-0479">Metal-binding</keyword>
<keyword id="KW-0524">Neurogenesis</keyword>
<keyword id="KW-0539">Nucleus</keyword>
<keyword id="KW-1185">Reference proteome</keyword>
<keyword id="KW-0677">Repeat</keyword>
<keyword id="KW-0726">Sexual differentiation</keyword>
<keyword id="KW-0862">Zinc</keyword>
<keyword id="KW-0863">Zinc-finger</keyword>
<evidence type="ECO:0000255" key="1">
    <source>
        <dbReference type="PROSITE-ProRule" id="PRU00037"/>
    </source>
</evidence>
<evidence type="ECO:0000255" key="2">
    <source>
        <dbReference type="PROSITE-ProRule" id="PRU00042"/>
    </source>
</evidence>
<evidence type="ECO:0000256" key="3">
    <source>
        <dbReference type="SAM" id="MobiDB-lite"/>
    </source>
</evidence>
<evidence type="ECO:0000269" key="4">
    <source>
    </source>
</evidence>
<evidence type="ECO:0000269" key="5">
    <source>
    </source>
</evidence>
<evidence type="ECO:0000269" key="6">
    <source>
    </source>
</evidence>
<evidence type="ECO:0000269" key="7">
    <source>
    </source>
</evidence>
<evidence type="ECO:0000269" key="8">
    <source>
    </source>
</evidence>
<evidence type="ECO:0000269" key="9">
    <source>
    </source>
</evidence>
<evidence type="ECO:0000303" key="10">
    <source>
    </source>
</evidence>
<evidence type="ECO:0000305" key="11"/>
<evidence type="ECO:0000312" key="12">
    <source>
        <dbReference type="EMBL" id="AAL25503.1"/>
    </source>
</evidence>
<evidence type="ECO:0000312" key="13">
    <source>
        <dbReference type="EMBL" id="AAN71452.1"/>
    </source>
</evidence>
<evidence type="ECO:0000312" key="14">
    <source>
        <dbReference type="EMBL" id="ACI88731.1"/>
    </source>
</evidence>
<evidence type="ECO:0000312" key="15">
    <source>
        <dbReference type="FlyBase" id="FBgn0086758"/>
    </source>
</evidence>
<evidence type="ECO:0000312" key="16">
    <source>
        <dbReference type="Proteomes" id="UP000000803"/>
    </source>
</evidence>
<dbReference type="EMBL" id="AE014134">
    <property type="protein sequence ID" value="AAF51350.2"/>
    <property type="molecule type" value="Genomic_DNA"/>
</dbReference>
<dbReference type="EMBL" id="AE014134">
    <property type="protein sequence ID" value="AAF51352.3"/>
    <property type="molecule type" value="Genomic_DNA"/>
</dbReference>
<dbReference type="EMBL" id="AE014134">
    <property type="protein sequence ID" value="AAN10454.1"/>
    <property type="molecule type" value="Genomic_DNA"/>
</dbReference>
<dbReference type="EMBL" id="AE014134">
    <property type="protein sequence ID" value="AFH03516.1"/>
    <property type="molecule type" value="Genomic_DNA"/>
</dbReference>
<dbReference type="EMBL" id="AY060464">
    <property type="protein sequence ID" value="AAL25503.1"/>
    <property type="molecule type" value="mRNA"/>
</dbReference>
<dbReference type="EMBL" id="BT001697">
    <property type="protein sequence ID" value="AAN71452.1"/>
    <property type="molecule type" value="mRNA"/>
</dbReference>
<dbReference type="EMBL" id="BT050405">
    <property type="protein sequence ID" value="ACI88731.1"/>
    <property type="molecule type" value="mRNA"/>
</dbReference>
<dbReference type="RefSeq" id="NP_001245839.1">
    <property type="nucleotide sequence ID" value="NM_001258910.2"/>
</dbReference>
<dbReference type="RefSeq" id="NP_608610.1">
    <property type="nucleotide sequence ID" value="NM_134766.6"/>
</dbReference>
<dbReference type="RefSeq" id="NP_722718.1">
    <property type="nucleotide sequence ID" value="NM_164429.3"/>
</dbReference>
<dbReference type="RefSeq" id="NP_722719.1">
    <property type="nucleotide sequence ID" value="NM_164430.4"/>
</dbReference>
<dbReference type="SMR" id="Q9VQ30"/>
<dbReference type="FunCoup" id="Q9VQ30">
    <property type="interactions" value="402"/>
</dbReference>
<dbReference type="IntAct" id="Q9VQ30">
    <property type="interactions" value="14"/>
</dbReference>
<dbReference type="STRING" id="7227.FBpp0292932"/>
<dbReference type="PaxDb" id="7227-FBpp0297890"/>
<dbReference type="DNASU" id="33343"/>
<dbReference type="EnsemblMetazoa" id="FBtr0077877">
    <property type="protein sequence ID" value="FBpp0077545"/>
    <property type="gene ID" value="FBgn0086758"/>
</dbReference>
<dbReference type="EnsemblMetazoa" id="FBtr0077878">
    <property type="protein sequence ID" value="FBpp0077546"/>
    <property type="gene ID" value="FBgn0086758"/>
</dbReference>
<dbReference type="EnsemblMetazoa" id="FBtr0303935">
    <property type="protein sequence ID" value="FBpp0292934"/>
    <property type="gene ID" value="FBgn0086758"/>
</dbReference>
<dbReference type="EnsemblMetazoa" id="FBtr0307047">
    <property type="protein sequence ID" value="FBpp0297890"/>
    <property type="gene ID" value="FBgn0086758"/>
</dbReference>
<dbReference type="GeneID" id="33343"/>
<dbReference type="KEGG" id="dme:Dmel_CG31666"/>
<dbReference type="UCSC" id="CG31666-RA">
    <property type="organism name" value="d. melanogaster"/>
</dbReference>
<dbReference type="AGR" id="FB:FBgn0086758"/>
<dbReference type="CTD" id="33343"/>
<dbReference type="FlyBase" id="FBgn0086758">
    <property type="gene designation" value="chinmo"/>
</dbReference>
<dbReference type="VEuPathDB" id="VectorBase:FBgn0086758"/>
<dbReference type="eggNOG" id="ENOG502RRBM">
    <property type="taxonomic scope" value="Eukaryota"/>
</dbReference>
<dbReference type="HOGENOM" id="CLU_011721_3_0_1"/>
<dbReference type="InParanoid" id="Q9VQ30"/>
<dbReference type="OMA" id="ANHSPXE"/>
<dbReference type="OrthoDB" id="10261408at2759"/>
<dbReference type="SignaLink" id="Q9VQ30"/>
<dbReference type="BioGRID-ORCS" id="33343">
    <property type="hits" value="1 hit in 1 CRISPR screen"/>
</dbReference>
<dbReference type="ChiTaRS" id="chinmo">
    <property type="organism name" value="fly"/>
</dbReference>
<dbReference type="GenomeRNAi" id="33343"/>
<dbReference type="PRO" id="PR:Q9VQ30"/>
<dbReference type="Proteomes" id="UP000000803">
    <property type="component" value="Chromosome 2L"/>
</dbReference>
<dbReference type="Bgee" id="FBgn0086758">
    <property type="expression patterns" value="Expressed in cyst progenitor cell (Drosophila) in testis and 250 other cell types or tissues"/>
</dbReference>
<dbReference type="ExpressionAtlas" id="Q9VQ30">
    <property type="expression patterns" value="baseline and differential"/>
</dbReference>
<dbReference type="GO" id="GO:0005634">
    <property type="term" value="C:nucleus"/>
    <property type="evidence" value="ECO:0000314"/>
    <property type="project" value="UniProtKB"/>
</dbReference>
<dbReference type="GO" id="GO:0008270">
    <property type="term" value="F:zinc ion binding"/>
    <property type="evidence" value="ECO:0007669"/>
    <property type="project" value="UniProtKB-KW"/>
</dbReference>
<dbReference type="GO" id="GO:0035214">
    <property type="term" value="P:eye-antennal disc development"/>
    <property type="evidence" value="ECO:0000315"/>
    <property type="project" value="UniProtKB"/>
</dbReference>
<dbReference type="GO" id="GO:0051170">
    <property type="term" value="P:import into nucleus"/>
    <property type="evidence" value="ECO:0000315"/>
    <property type="project" value="UniProtKB"/>
</dbReference>
<dbReference type="GO" id="GO:0019102">
    <property type="term" value="P:male somatic sex determination"/>
    <property type="evidence" value="ECO:0000315"/>
    <property type="project" value="UniProtKB"/>
</dbReference>
<dbReference type="GO" id="GO:0016319">
    <property type="term" value="P:mushroom body development"/>
    <property type="evidence" value="ECO:0000315"/>
    <property type="project" value="FlyBase"/>
</dbReference>
<dbReference type="GO" id="GO:0001933">
    <property type="term" value="P:negative regulation of protein phosphorylation"/>
    <property type="evidence" value="ECO:0000315"/>
    <property type="project" value="UniProtKB"/>
</dbReference>
<dbReference type="GO" id="GO:0048666">
    <property type="term" value="P:neuron development"/>
    <property type="evidence" value="ECO:0000315"/>
    <property type="project" value="UniProtKB"/>
</dbReference>
<dbReference type="GO" id="GO:0030838">
    <property type="term" value="P:positive regulation of actin filament polymerization"/>
    <property type="evidence" value="ECO:0000315"/>
    <property type="project" value="UniProtKB"/>
</dbReference>
<dbReference type="GO" id="GO:2000035">
    <property type="term" value="P:regulation of stem cell division"/>
    <property type="evidence" value="ECO:0000315"/>
    <property type="project" value="UniProtKB"/>
</dbReference>
<dbReference type="GO" id="GO:0006357">
    <property type="term" value="P:regulation of transcription by RNA polymerase II"/>
    <property type="evidence" value="ECO:0000318"/>
    <property type="project" value="GO_Central"/>
</dbReference>
<dbReference type="GO" id="GO:0061771">
    <property type="term" value="P:response to caloric restriction"/>
    <property type="evidence" value="ECO:0000270"/>
    <property type="project" value="FlyBase"/>
</dbReference>
<dbReference type="GO" id="GO:0007548">
    <property type="term" value="P:sex differentiation"/>
    <property type="evidence" value="ECO:0007669"/>
    <property type="project" value="UniProtKB-KW"/>
</dbReference>
<dbReference type="CDD" id="cd18315">
    <property type="entry name" value="BTB_POZ_BAB-like"/>
    <property type="match status" value="1"/>
</dbReference>
<dbReference type="FunFam" id="3.30.160.60:FF:002164">
    <property type="entry name" value="Zinc finger protein chinmo"/>
    <property type="match status" value="1"/>
</dbReference>
<dbReference type="FunFam" id="3.30.710.10:FF:000156">
    <property type="entry name" value="Zinc finger protein chinmo"/>
    <property type="match status" value="1"/>
</dbReference>
<dbReference type="Gene3D" id="3.30.160.60">
    <property type="entry name" value="Classic Zinc Finger"/>
    <property type="match status" value="1"/>
</dbReference>
<dbReference type="Gene3D" id="3.30.710.10">
    <property type="entry name" value="Potassium Channel Kv1.1, Chain A"/>
    <property type="match status" value="1"/>
</dbReference>
<dbReference type="InterPro" id="IPR000210">
    <property type="entry name" value="BTB/POZ_dom"/>
</dbReference>
<dbReference type="InterPro" id="IPR051095">
    <property type="entry name" value="Dros_DevTransReg"/>
</dbReference>
<dbReference type="InterPro" id="IPR011333">
    <property type="entry name" value="SKP1/BTB/POZ_sf"/>
</dbReference>
<dbReference type="InterPro" id="IPR036236">
    <property type="entry name" value="Znf_C2H2_sf"/>
</dbReference>
<dbReference type="InterPro" id="IPR013087">
    <property type="entry name" value="Znf_C2H2_type"/>
</dbReference>
<dbReference type="PANTHER" id="PTHR23110">
    <property type="entry name" value="BTB DOMAIN TRANSCRIPTION FACTOR"/>
    <property type="match status" value="1"/>
</dbReference>
<dbReference type="PANTHER" id="PTHR23110:SF94">
    <property type="entry name" value="ZINC FINGER PROTEIN CHINMO"/>
    <property type="match status" value="1"/>
</dbReference>
<dbReference type="Pfam" id="PF00651">
    <property type="entry name" value="BTB"/>
    <property type="match status" value="1"/>
</dbReference>
<dbReference type="Pfam" id="PF00096">
    <property type="entry name" value="zf-C2H2"/>
    <property type="match status" value="1"/>
</dbReference>
<dbReference type="SMART" id="SM00225">
    <property type="entry name" value="BTB"/>
    <property type="match status" value="1"/>
</dbReference>
<dbReference type="SMART" id="SM00355">
    <property type="entry name" value="ZnF_C2H2"/>
    <property type="match status" value="2"/>
</dbReference>
<dbReference type="SUPFAM" id="SSF57667">
    <property type="entry name" value="beta-beta-alpha zinc fingers"/>
    <property type="match status" value="1"/>
</dbReference>
<dbReference type="SUPFAM" id="SSF54695">
    <property type="entry name" value="POZ domain"/>
    <property type="match status" value="1"/>
</dbReference>
<dbReference type="PROSITE" id="PS50097">
    <property type="entry name" value="BTB"/>
    <property type="match status" value="1"/>
</dbReference>
<dbReference type="PROSITE" id="PS00028">
    <property type="entry name" value="ZINC_FINGER_C2H2_1"/>
    <property type="match status" value="2"/>
</dbReference>
<dbReference type="PROSITE" id="PS50157">
    <property type="entry name" value="ZINC_FINGER_C2H2_2"/>
    <property type="match status" value="2"/>
</dbReference>
<organism evidence="16">
    <name type="scientific">Drosophila melanogaster</name>
    <name type="common">Fruit fly</name>
    <dbReference type="NCBI Taxonomy" id="7227"/>
    <lineage>
        <taxon>Eukaryota</taxon>
        <taxon>Metazoa</taxon>
        <taxon>Ecdysozoa</taxon>
        <taxon>Arthropoda</taxon>
        <taxon>Hexapoda</taxon>
        <taxon>Insecta</taxon>
        <taxon>Pterygota</taxon>
        <taxon>Neoptera</taxon>
        <taxon>Endopterygota</taxon>
        <taxon>Diptera</taxon>
        <taxon>Brachycera</taxon>
        <taxon>Muscomorpha</taxon>
        <taxon>Ephydroidea</taxon>
        <taxon>Drosophilidae</taxon>
        <taxon>Drosophila</taxon>
        <taxon>Sophophora</taxon>
    </lineage>
</organism>
<reference evidence="16" key="1">
    <citation type="journal article" date="2000" name="Science">
        <title>The genome sequence of Drosophila melanogaster.</title>
        <authorList>
            <person name="Adams M.D."/>
            <person name="Celniker S.E."/>
            <person name="Holt R.A."/>
            <person name="Evans C.A."/>
            <person name="Gocayne J.D."/>
            <person name="Amanatides P.G."/>
            <person name="Scherer S.E."/>
            <person name="Li P.W."/>
            <person name="Hoskins R.A."/>
            <person name="Galle R.F."/>
            <person name="George R.A."/>
            <person name="Lewis S.E."/>
            <person name="Richards S."/>
            <person name="Ashburner M."/>
            <person name="Henderson S.N."/>
            <person name="Sutton G.G."/>
            <person name="Wortman J.R."/>
            <person name="Yandell M.D."/>
            <person name="Zhang Q."/>
            <person name="Chen L.X."/>
            <person name="Brandon R.C."/>
            <person name="Rogers Y.-H.C."/>
            <person name="Blazej R.G."/>
            <person name="Champe M."/>
            <person name="Pfeiffer B.D."/>
            <person name="Wan K.H."/>
            <person name="Doyle C."/>
            <person name="Baxter E.G."/>
            <person name="Helt G."/>
            <person name="Nelson C.R."/>
            <person name="Miklos G.L.G."/>
            <person name="Abril J.F."/>
            <person name="Agbayani A."/>
            <person name="An H.-J."/>
            <person name="Andrews-Pfannkoch C."/>
            <person name="Baldwin D."/>
            <person name="Ballew R.M."/>
            <person name="Basu A."/>
            <person name="Baxendale J."/>
            <person name="Bayraktaroglu L."/>
            <person name="Beasley E.M."/>
            <person name="Beeson K.Y."/>
            <person name="Benos P.V."/>
            <person name="Berman B.P."/>
            <person name="Bhandari D."/>
            <person name="Bolshakov S."/>
            <person name="Borkova D."/>
            <person name="Botchan M.R."/>
            <person name="Bouck J."/>
            <person name="Brokstein P."/>
            <person name="Brottier P."/>
            <person name="Burtis K.C."/>
            <person name="Busam D.A."/>
            <person name="Butler H."/>
            <person name="Cadieu E."/>
            <person name="Center A."/>
            <person name="Chandra I."/>
            <person name="Cherry J.M."/>
            <person name="Cawley S."/>
            <person name="Dahlke C."/>
            <person name="Davenport L.B."/>
            <person name="Davies P."/>
            <person name="de Pablos B."/>
            <person name="Delcher A."/>
            <person name="Deng Z."/>
            <person name="Mays A.D."/>
            <person name="Dew I."/>
            <person name="Dietz S.M."/>
            <person name="Dodson K."/>
            <person name="Doup L.E."/>
            <person name="Downes M."/>
            <person name="Dugan-Rocha S."/>
            <person name="Dunkov B.C."/>
            <person name="Dunn P."/>
            <person name="Durbin K.J."/>
            <person name="Evangelista C.C."/>
            <person name="Ferraz C."/>
            <person name="Ferriera S."/>
            <person name="Fleischmann W."/>
            <person name="Fosler C."/>
            <person name="Gabrielian A.E."/>
            <person name="Garg N.S."/>
            <person name="Gelbart W.M."/>
            <person name="Glasser K."/>
            <person name="Glodek A."/>
            <person name="Gong F."/>
            <person name="Gorrell J.H."/>
            <person name="Gu Z."/>
            <person name="Guan P."/>
            <person name="Harris M."/>
            <person name="Harris N.L."/>
            <person name="Harvey D.A."/>
            <person name="Heiman T.J."/>
            <person name="Hernandez J.R."/>
            <person name="Houck J."/>
            <person name="Hostin D."/>
            <person name="Houston K.A."/>
            <person name="Howland T.J."/>
            <person name="Wei M.-H."/>
            <person name="Ibegwam C."/>
            <person name="Jalali M."/>
            <person name="Kalush F."/>
            <person name="Karpen G.H."/>
            <person name="Ke Z."/>
            <person name="Kennison J.A."/>
            <person name="Ketchum K.A."/>
            <person name="Kimmel B.E."/>
            <person name="Kodira C.D."/>
            <person name="Kraft C.L."/>
            <person name="Kravitz S."/>
            <person name="Kulp D."/>
            <person name="Lai Z."/>
            <person name="Lasko P."/>
            <person name="Lei Y."/>
            <person name="Levitsky A.A."/>
            <person name="Li J.H."/>
            <person name="Li Z."/>
            <person name="Liang Y."/>
            <person name="Lin X."/>
            <person name="Liu X."/>
            <person name="Mattei B."/>
            <person name="McIntosh T.C."/>
            <person name="McLeod M.P."/>
            <person name="McPherson D."/>
            <person name="Merkulov G."/>
            <person name="Milshina N.V."/>
            <person name="Mobarry C."/>
            <person name="Morris J."/>
            <person name="Moshrefi A."/>
            <person name="Mount S.M."/>
            <person name="Moy M."/>
            <person name="Murphy B."/>
            <person name="Murphy L."/>
            <person name="Muzny D.M."/>
            <person name="Nelson D.L."/>
            <person name="Nelson D.R."/>
            <person name="Nelson K.A."/>
            <person name="Nixon K."/>
            <person name="Nusskern D.R."/>
            <person name="Pacleb J.M."/>
            <person name="Palazzolo M."/>
            <person name="Pittman G.S."/>
            <person name="Pan S."/>
            <person name="Pollard J."/>
            <person name="Puri V."/>
            <person name="Reese M.G."/>
            <person name="Reinert K."/>
            <person name="Remington K."/>
            <person name="Saunders R.D.C."/>
            <person name="Scheeler F."/>
            <person name="Shen H."/>
            <person name="Shue B.C."/>
            <person name="Siden-Kiamos I."/>
            <person name="Simpson M."/>
            <person name="Skupski M.P."/>
            <person name="Smith T.J."/>
            <person name="Spier E."/>
            <person name="Spradling A.C."/>
            <person name="Stapleton M."/>
            <person name="Strong R."/>
            <person name="Sun E."/>
            <person name="Svirskas R."/>
            <person name="Tector C."/>
            <person name="Turner R."/>
            <person name="Venter E."/>
            <person name="Wang A.H."/>
            <person name="Wang X."/>
            <person name="Wang Z.-Y."/>
            <person name="Wassarman D.A."/>
            <person name="Weinstock G.M."/>
            <person name="Weissenbach J."/>
            <person name="Williams S.M."/>
            <person name="Woodage T."/>
            <person name="Worley K.C."/>
            <person name="Wu D."/>
            <person name="Yang S."/>
            <person name="Yao Q.A."/>
            <person name="Ye J."/>
            <person name="Yeh R.-F."/>
            <person name="Zaveri J.S."/>
            <person name="Zhan M."/>
            <person name="Zhang G."/>
            <person name="Zhao Q."/>
            <person name="Zheng L."/>
            <person name="Zheng X.H."/>
            <person name="Zhong F.N."/>
            <person name="Zhong W."/>
            <person name="Zhou X."/>
            <person name="Zhu S.C."/>
            <person name="Zhu X."/>
            <person name="Smith H.O."/>
            <person name="Gibbs R.A."/>
            <person name="Myers E.W."/>
            <person name="Rubin G.M."/>
            <person name="Venter J.C."/>
        </authorList>
    </citation>
    <scope>NUCLEOTIDE SEQUENCE [LARGE SCALE GENOMIC DNA]</scope>
    <source>
        <strain evidence="16">Berkeley</strain>
    </source>
</reference>
<reference evidence="16" key="2">
    <citation type="journal article" date="2002" name="Genome Biol.">
        <title>Annotation of the Drosophila melanogaster euchromatic genome: a systematic review.</title>
        <authorList>
            <person name="Misra S."/>
            <person name="Crosby M.A."/>
            <person name="Mungall C.J."/>
            <person name="Matthews B.B."/>
            <person name="Campbell K.S."/>
            <person name="Hradecky P."/>
            <person name="Huang Y."/>
            <person name="Kaminker J.S."/>
            <person name="Millburn G.H."/>
            <person name="Prochnik S.E."/>
            <person name="Smith C.D."/>
            <person name="Tupy J.L."/>
            <person name="Whitfield E.J."/>
            <person name="Bayraktaroglu L."/>
            <person name="Berman B.P."/>
            <person name="Bettencourt B.R."/>
            <person name="Celniker S.E."/>
            <person name="de Grey A.D.N.J."/>
            <person name="Drysdale R.A."/>
            <person name="Harris N.L."/>
            <person name="Richter J."/>
            <person name="Russo S."/>
            <person name="Schroeder A.J."/>
            <person name="Shu S.Q."/>
            <person name="Stapleton M."/>
            <person name="Yamada C."/>
            <person name="Ashburner M."/>
            <person name="Gelbart W.M."/>
            <person name="Rubin G.M."/>
            <person name="Lewis S.E."/>
        </authorList>
    </citation>
    <scope>GENOME REANNOTATION</scope>
    <source>
        <strain evidence="16">Berkeley</strain>
    </source>
</reference>
<reference evidence="12 13" key="3">
    <citation type="journal article" date="2002" name="Genome Biol.">
        <title>A Drosophila full-length cDNA resource.</title>
        <authorList>
            <person name="Stapleton M."/>
            <person name="Carlson J.W."/>
            <person name="Brokstein P."/>
            <person name="Yu C."/>
            <person name="Champe M."/>
            <person name="George R.A."/>
            <person name="Guarin H."/>
            <person name="Kronmiller B."/>
            <person name="Pacleb J.M."/>
            <person name="Park S."/>
            <person name="Wan K.H."/>
            <person name="Rubin G.M."/>
            <person name="Celniker S.E."/>
        </authorList>
    </citation>
    <scope>NUCLEOTIDE SEQUENCE [LARGE SCALE MRNA]</scope>
    <source>
        <strain evidence="12 13">Berkeley</strain>
        <tissue evidence="12 13">Embryo</tissue>
    </source>
</reference>
<reference evidence="14" key="4">
    <citation type="submission" date="2008-10" db="EMBL/GenBank/DDBJ databases">
        <authorList>
            <person name="Carlson J."/>
            <person name="Booth B."/>
            <person name="Frise E."/>
            <person name="Park S."/>
            <person name="Wan K."/>
            <person name="Yu C."/>
            <person name="Celniker S."/>
        </authorList>
    </citation>
    <scope>NUCLEOTIDE SEQUENCE [LARGE SCALE MRNA]</scope>
    <source>
        <strain evidence="14">Berkeley</strain>
    </source>
</reference>
<reference evidence="11" key="5">
    <citation type="journal article" date="2006" name="Cell">
        <title>Gradients of the Drosophila Chinmo BTB-zinc finger protein govern neuronal temporal identity.</title>
        <authorList>
            <person name="Zhu S."/>
            <person name="Lin S."/>
            <person name="Kao C.F."/>
            <person name="Awasaki T."/>
            <person name="Chiang A.S."/>
            <person name="Lee T."/>
        </authorList>
    </citation>
    <scope>FUNCTION</scope>
    <scope>SUBCELLULAR LOCATION</scope>
    <scope>TISSUE SPECIFICITY</scope>
    <scope>DEVELOPMENTAL STAGE</scope>
    <scope>DISRUPTION PHENOTYPE</scope>
    <scope>MUTAGENESIS OF PHE-88</scope>
</reference>
<reference evidence="11" key="6">
    <citation type="journal article" date="2010" name="Dev. Cell">
        <title>chinmo is a functional effector of the JAK/STAT pathway that regulates eye development, tumor formation, and stem cell self-renewal in Drosophila.</title>
        <authorList>
            <person name="Flaherty M.S."/>
            <person name="Salis P."/>
            <person name="Evans C.J."/>
            <person name="Ekas L.A."/>
            <person name="Marouf A."/>
            <person name="Zavadil J."/>
            <person name="Banerjee U."/>
            <person name="Bach E.A."/>
        </authorList>
    </citation>
    <scope>FUNCTION</scope>
    <scope>TISSUE SPECIFICITY</scope>
    <scope>DISRUPTION PHENOTYPE</scope>
</reference>
<reference evidence="11" key="7">
    <citation type="journal article" date="2014" name="Dev. Cell">
        <title>The Jak-STAT target Chinmo prevents sex transformation of adult stem cells in the Drosophila testis niche.</title>
        <authorList>
            <person name="Ma Q."/>
            <person name="Wawersik M."/>
            <person name="Matunis E.L."/>
        </authorList>
    </citation>
    <scope>FUNCTION</scope>
    <scope>DISRUPTION PHENOTYPE</scope>
</reference>
<reference evidence="11" key="8">
    <citation type="journal article" date="2015" name="J. Cell Sci.">
        <title>Genome-wide RNAi screen for nuclear actin reveals a network of cofilin regulators.</title>
        <authorList>
            <person name="Dopie J."/>
            <person name="Rajakylae E.K."/>
            <person name="Joensuu M.S."/>
            <person name="Huet G."/>
            <person name="Ferrantelli E."/>
            <person name="Xie T."/>
            <person name="Jaeaelinoja H."/>
            <person name="Jokitalo E."/>
            <person name="Vartiainen M.K."/>
        </authorList>
    </citation>
    <scope>FUNCTION</scope>
    <scope>DISRUPTION PHENOTYPE</scope>
</reference>
<reference evidence="11" key="9">
    <citation type="journal article" date="2016" name="Development">
        <title>Chinmo is sufficient to induce male fate in somatic cells of the adult Drosophila ovary.</title>
        <authorList>
            <person name="Ma Q."/>
            <person name="de Cuevas M."/>
            <person name="Matunis E.L."/>
        </authorList>
    </citation>
    <scope>DISRUPTION PHENOTYPE</scope>
</reference>
<reference key="10">
    <citation type="journal article" date="2018" name="PLoS Genet.">
        <title>Chinmo prevents transformer alternative splicing to maintain male sex identity.</title>
        <authorList>
            <person name="Grmai L."/>
            <person name="Hudry B."/>
            <person name="Miguel-Aliaga I."/>
            <person name="Bach E.A."/>
        </authorList>
    </citation>
    <scope>FUNCTION</scope>
    <scope>TISSUE SPECIFICITY</scope>
    <scope>DISRUPTION PHENOTYPE</scope>
</reference>
<feature type="chain" id="PRO_0000438593" description="Zinc finger protein chinmo">
    <location>
        <begin position="1"/>
        <end position="604"/>
    </location>
</feature>
<feature type="domain" description="BTB" evidence="1">
    <location>
        <begin position="32"/>
        <end position="98"/>
    </location>
</feature>
<feature type="zinc finger region" description="C2H2-type 1" evidence="2">
    <location>
        <begin position="517"/>
        <end position="540"/>
    </location>
</feature>
<feature type="zinc finger region" description="C2H2-type 2" evidence="2">
    <location>
        <begin position="545"/>
        <end position="568"/>
    </location>
</feature>
<feature type="region of interest" description="Disordered" evidence="3">
    <location>
        <begin position="122"/>
        <end position="155"/>
    </location>
</feature>
<feature type="region of interest" description="Disordered" evidence="3">
    <location>
        <begin position="291"/>
        <end position="310"/>
    </location>
</feature>
<feature type="region of interest" description="Disordered" evidence="3">
    <location>
        <begin position="330"/>
        <end position="437"/>
    </location>
</feature>
<feature type="region of interest" description="Disordered" evidence="3">
    <location>
        <begin position="450"/>
        <end position="470"/>
    </location>
</feature>
<feature type="compositionally biased region" description="Low complexity" evidence="3">
    <location>
        <begin position="364"/>
        <end position="374"/>
    </location>
</feature>
<feature type="compositionally biased region" description="Polar residues" evidence="3">
    <location>
        <begin position="384"/>
        <end position="409"/>
    </location>
</feature>
<feature type="compositionally biased region" description="Acidic residues" evidence="3">
    <location>
        <begin position="425"/>
        <end position="437"/>
    </location>
</feature>
<feature type="compositionally biased region" description="Low complexity" evidence="3">
    <location>
        <begin position="461"/>
        <end position="470"/>
    </location>
</feature>
<feature type="mutagenesis site" description="In chinmo-M33; mushroom body neuroblast clones contain increased numbers of late-born alpha/beta type neurons and fewer early-born gamma type neurons." evidence="4">
    <original>F</original>
    <variation>I</variation>
    <location>
        <position position="88"/>
    </location>
</feature>
<feature type="sequence conflict" description="In Ref. 3; AAN71452." evidence="11" ref="3">
    <original>V</original>
    <variation>A</variation>
    <location>
        <position position="497"/>
    </location>
</feature>
<comment type="function">
    <text evidence="4 5 6 7 9">Required for morphological differentiation of postmitotic neurons during postembryonic brain development (PubMed:17055440). Ensures production of appropriate neuron subtypes within a lineage by preventing precocious generation of late neuronal types of that lineage (PubMed:17055440). Acts as a downstream mediator of the transcriptional activator Stat92e and is required for the development of the eye-antennal disk which gives rise to the adult eye, antenna and head capsule, for transcriptional repression of the Notch receptor ligand Ser and for the self-renewal of cyst stem cells in the testis (PubMed:20412771). In the adult testis, maintains the male identify of adult somatic cyst stem cells (PubMed:25453558, PubMed:29389999). Represses expression and alternative splicing of transformer pre-mRNA, resulting in the production of the male-specific isoform of transcription factor dsx which ensures male-specific transcription of target genes (PubMed:25453558, PubMed:29389999). Plays a role in actin nuclear localization through its involvement in repressing the expression of the kinase Cdi (PubMed:26021350). This maintains the cofilin/actin-depolymerizing factor homolog tsr in its unphosphorylated state which is required for actin nuclear import (PubMed:26021350).</text>
</comment>
<comment type="interaction">
    <interactant intactId="EBI-93669">
        <id>Q9VQ30</id>
    </interactant>
    <interactant intactId="EBI-22059119">
        <id>M9PFG6</id>
        <label>Sox21a</label>
    </interactant>
    <organismsDiffer>false</organismsDiffer>
    <experiments>2</experiments>
</comment>
<comment type="subcellular location">
    <subcellularLocation>
        <location evidence="4">Nucleus</location>
    </subcellularLocation>
</comment>
<comment type="tissue specificity">
    <text evidence="4 5 9">Broadly expressed in the developing larval central nervous system (at protein level) (PubMed:17055440). Expressed in the larval lymph gland and circulating hemocytes (at protein level) (PubMed:20412771). Expressed in all cell types of the adult testis stem cell niche but not detected in somatic cells of the adult ovary (at protein level) (PubMed:29389999). In the testis, expressed at high levels in cyst stem cells and early cyst cells and, at lower levels, in germline stem cells (at protein level) (PubMed:20412771).</text>
</comment>
<comment type="developmental stage">
    <text evidence="4">In the mushroom body, abundant at early larval stages, becomes much reduced in wandering larvae and is undetectable in young pupae. Expressed at higher levels in postmitotic neurons born at early postembryonic developmental stages than in later-born neurons of the same lineage.</text>
</comment>
<comment type="disruption phenotype">
    <text evidence="4 5 6 7 8 9">Inappropriate morphogenesis of larval mushroom body neurons with early-born neurons adopting the fate of late-born neurons from the same lineage (PubMed:17055440). Malformed eyes and head capsules due to defects in eye progenitor cells (PubMed:20412771). RNAi-mediated knockdown in adult cyst stem cells and early cyst cells results in the appearance of cells resembling ovarian follicle cells throughout the testis (PubMed:25453558). RNAi-mediated knockdown in adult cyst stem cells results in loss of expression of the male-specific isoform of transcription factor dsx and leads to male sterility (PubMed:29389999). RNAi-mediated knockdown in imaginal wing disks results in decreased levels of nuclear actin (PubMed:26021350). RNAi-mediated knockdown in adult ovary somatic stem cells results in ovaries which are morphologically indistinguishable from the wild-type while ectopic expression in the adult ovary is sufficient to induce male fate in somatic cells (PubMed:26811385).</text>
</comment>
<protein>
    <recommendedName>
        <fullName evidence="11">Zinc finger protein chinmo</fullName>
    </recommendedName>
    <alternativeName>
        <fullName evidence="10">Protein chronologically inappropriate morphogenesis</fullName>
    </alternativeName>
</protein>
<name>CHNMO_DROME</name>
<gene>
    <name evidence="10 15" type="primary">chinmo</name>
    <name evidence="15" type="ORF">CG31666</name>
</gene>
<proteinExistence type="evidence at protein level"/>